<proteinExistence type="inferred from homology"/>
<protein>
    <recommendedName>
        <fullName>Probable serine/threonine-protein kinase MEC1 homolog</fullName>
        <ecNumber>2.7.11.1</ecNumber>
    </recommendedName>
    <alternativeName>
        <fullName>ATR homolog</fullName>
    </alternativeName>
    <alternativeName>
        <fullName>DNA-damage checkpoint kinase MEC1 homolog</fullName>
    </alternativeName>
</protein>
<evidence type="ECO:0000250" key="1"/>
<evidence type="ECO:0000255" key="2">
    <source>
        <dbReference type="PROSITE-ProRule" id="PRU00269"/>
    </source>
</evidence>
<evidence type="ECO:0000255" key="3">
    <source>
        <dbReference type="PROSITE-ProRule" id="PRU00534"/>
    </source>
</evidence>
<evidence type="ECO:0000255" key="4">
    <source>
        <dbReference type="PROSITE-ProRule" id="PRU00535"/>
    </source>
</evidence>
<evidence type="ECO:0000256" key="5">
    <source>
        <dbReference type="SAM" id="MobiDB-lite"/>
    </source>
</evidence>
<evidence type="ECO:0000305" key="6"/>
<feature type="chain" id="PRO_0000385338" description="Probable serine/threonine-protein kinase MEC1 homolog">
    <location>
        <begin position="1"/>
        <end position="1805"/>
    </location>
</feature>
<feature type="domain" description="FAT" evidence="3">
    <location>
        <begin position="928"/>
        <end position="1420"/>
    </location>
</feature>
<feature type="domain" description="PI3K/PI4K catalytic" evidence="2">
    <location>
        <begin position="1494"/>
        <end position="1793"/>
    </location>
</feature>
<feature type="domain" description="FATC" evidence="4">
    <location>
        <begin position="1773"/>
        <end position="1805"/>
    </location>
</feature>
<feature type="region of interest" description="Disordered" evidence="5">
    <location>
        <begin position="406"/>
        <end position="425"/>
    </location>
</feature>
<feature type="region of interest" description="G-loop" evidence="2">
    <location>
        <begin position="1500"/>
        <end position="1506"/>
    </location>
</feature>
<feature type="region of interest" description="Catalytic loop" evidence="2">
    <location>
        <begin position="1660"/>
        <end position="1668"/>
    </location>
</feature>
<feature type="region of interest" description="Activation loop" evidence="2">
    <location>
        <begin position="1680"/>
        <end position="1704"/>
    </location>
</feature>
<comment type="function">
    <text evidence="1">Serine/threonine protein kinase which activates checkpoint signaling upon genotoxic stresses such as ionizing radiation (IR), ultraviolet light (UV), or DNA replication stalling, thereby acting as a DNA damage sensor. Recognizes the substrate consensus sequence [ST]-Q. Recruited to DNA lesions in order to initiate the DNA repair by homologous recombination. Phosphorylates histone H2A to form H2AS128ph (gamma-H2A) at sites of DNA damage, also involved in the regulation of DNA damage response mechanism. Required for cell growth and meiotic recombination (By similarity).</text>
</comment>
<comment type="catalytic activity">
    <reaction>
        <text>L-seryl-[protein] + ATP = O-phospho-L-seryl-[protein] + ADP + H(+)</text>
        <dbReference type="Rhea" id="RHEA:17989"/>
        <dbReference type="Rhea" id="RHEA-COMP:9863"/>
        <dbReference type="Rhea" id="RHEA-COMP:11604"/>
        <dbReference type="ChEBI" id="CHEBI:15378"/>
        <dbReference type="ChEBI" id="CHEBI:29999"/>
        <dbReference type="ChEBI" id="CHEBI:30616"/>
        <dbReference type="ChEBI" id="CHEBI:83421"/>
        <dbReference type="ChEBI" id="CHEBI:456216"/>
        <dbReference type="EC" id="2.7.11.1"/>
    </reaction>
</comment>
<comment type="catalytic activity">
    <reaction>
        <text>L-threonyl-[protein] + ATP = O-phospho-L-threonyl-[protein] + ADP + H(+)</text>
        <dbReference type="Rhea" id="RHEA:46608"/>
        <dbReference type="Rhea" id="RHEA-COMP:11060"/>
        <dbReference type="Rhea" id="RHEA-COMP:11605"/>
        <dbReference type="ChEBI" id="CHEBI:15378"/>
        <dbReference type="ChEBI" id="CHEBI:30013"/>
        <dbReference type="ChEBI" id="CHEBI:30616"/>
        <dbReference type="ChEBI" id="CHEBI:61977"/>
        <dbReference type="ChEBI" id="CHEBI:456216"/>
        <dbReference type="EC" id="2.7.11.1"/>
    </reaction>
</comment>
<comment type="subcellular location">
    <subcellularLocation>
        <location evidence="1">Nucleus</location>
    </subcellularLocation>
    <text evidence="1">Localizes to nuclear DNA repair foci in response to DNA double strand breaks.</text>
</comment>
<comment type="similarity">
    <text evidence="6">Belongs to the PI3/PI4-kinase family. ATM subfamily.</text>
</comment>
<dbReference type="EC" id="2.7.11.1"/>
<dbReference type="EMBL" id="AL590442">
    <property type="protein sequence ID" value="CAD25142.2"/>
    <property type="molecule type" value="Genomic_DNA"/>
</dbReference>
<dbReference type="RefSeq" id="NP_584638.1">
    <property type="nucleotide sequence ID" value="NM_001040827.1"/>
</dbReference>
<dbReference type="SMR" id="Q8SSE7"/>
<dbReference type="STRING" id="284813.Q8SSE7"/>
<dbReference type="GeneID" id="858628"/>
<dbReference type="KEGG" id="ecu:ECU02_1130"/>
<dbReference type="VEuPathDB" id="MicrosporidiaDB:ECU02_1130"/>
<dbReference type="HOGENOM" id="CLU_241340_0_0_1"/>
<dbReference type="InParanoid" id="Q8SSE7"/>
<dbReference type="OrthoDB" id="381190at2759"/>
<dbReference type="Proteomes" id="UP000000819">
    <property type="component" value="Chromosome II"/>
</dbReference>
<dbReference type="GO" id="GO:0005694">
    <property type="term" value="C:chromosome"/>
    <property type="evidence" value="ECO:0007669"/>
    <property type="project" value="TreeGrafter"/>
</dbReference>
<dbReference type="GO" id="GO:0005634">
    <property type="term" value="C:nucleus"/>
    <property type="evidence" value="ECO:0007669"/>
    <property type="project" value="UniProtKB-SubCell"/>
</dbReference>
<dbReference type="GO" id="GO:0005524">
    <property type="term" value="F:ATP binding"/>
    <property type="evidence" value="ECO:0007669"/>
    <property type="project" value="UniProtKB-KW"/>
</dbReference>
<dbReference type="GO" id="GO:0106310">
    <property type="term" value="F:protein serine kinase activity"/>
    <property type="evidence" value="ECO:0007669"/>
    <property type="project" value="RHEA"/>
</dbReference>
<dbReference type="GO" id="GO:0004674">
    <property type="term" value="F:protein serine/threonine kinase activity"/>
    <property type="evidence" value="ECO:0007669"/>
    <property type="project" value="UniProtKB-KW"/>
</dbReference>
<dbReference type="GO" id="GO:0006325">
    <property type="term" value="P:chromatin organization"/>
    <property type="evidence" value="ECO:0007669"/>
    <property type="project" value="UniProtKB-KW"/>
</dbReference>
<dbReference type="GO" id="GO:0000077">
    <property type="term" value="P:DNA damage checkpoint signaling"/>
    <property type="evidence" value="ECO:0007669"/>
    <property type="project" value="TreeGrafter"/>
</dbReference>
<dbReference type="GO" id="GO:0006281">
    <property type="term" value="P:DNA repair"/>
    <property type="evidence" value="ECO:0007669"/>
    <property type="project" value="UniProtKB-KW"/>
</dbReference>
<dbReference type="GO" id="GO:0051321">
    <property type="term" value="P:meiotic cell cycle"/>
    <property type="evidence" value="ECO:0007669"/>
    <property type="project" value="UniProtKB-KW"/>
</dbReference>
<dbReference type="GO" id="GO:0000723">
    <property type="term" value="P:telomere maintenance"/>
    <property type="evidence" value="ECO:0007669"/>
    <property type="project" value="TreeGrafter"/>
</dbReference>
<dbReference type="CDD" id="cd00892">
    <property type="entry name" value="PIKKc_ATR"/>
    <property type="match status" value="1"/>
</dbReference>
<dbReference type="Gene3D" id="1.10.1070.11">
    <property type="entry name" value="Phosphatidylinositol 3-/4-kinase, catalytic domain"/>
    <property type="match status" value="1"/>
</dbReference>
<dbReference type="Gene3D" id="3.30.1010.10">
    <property type="entry name" value="Phosphatidylinositol 3-kinase Catalytic Subunit, Chain A, domain 4"/>
    <property type="match status" value="1"/>
</dbReference>
<dbReference type="InterPro" id="IPR050517">
    <property type="entry name" value="DDR_Repair_Kinase"/>
</dbReference>
<dbReference type="InterPro" id="IPR003152">
    <property type="entry name" value="FATC_dom"/>
</dbReference>
<dbReference type="InterPro" id="IPR011009">
    <property type="entry name" value="Kinase-like_dom_sf"/>
</dbReference>
<dbReference type="InterPro" id="IPR000403">
    <property type="entry name" value="PI3/4_kinase_cat_dom"/>
</dbReference>
<dbReference type="InterPro" id="IPR036940">
    <property type="entry name" value="PI3/4_kinase_cat_sf"/>
</dbReference>
<dbReference type="InterPro" id="IPR014009">
    <property type="entry name" value="PIK_FAT"/>
</dbReference>
<dbReference type="PANTHER" id="PTHR11139">
    <property type="entry name" value="ATAXIA TELANGIECTASIA MUTATED ATM -RELATED"/>
    <property type="match status" value="1"/>
</dbReference>
<dbReference type="PANTHER" id="PTHR11139:SF69">
    <property type="entry name" value="SERINE_THREONINE-PROTEIN KINASE ATR"/>
    <property type="match status" value="1"/>
</dbReference>
<dbReference type="Pfam" id="PF02260">
    <property type="entry name" value="FATC"/>
    <property type="match status" value="1"/>
</dbReference>
<dbReference type="Pfam" id="PF23593">
    <property type="entry name" value="HEAT_ATR"/>
    <property type="match status" value="1"/>
</dbReference>
<dbReference type="Pfam" id="PF00454">
    <property type="entry name" value="PI3_PI4_kinase"/>
    <property type="match status" value="1"/>
</dbReference>
<dbReference type="SMART" id="SM01343">
    <property type="entry name" value="FATC"/>
    <property type="match status" value="1"/>
</dbReference>
<dbReference type="SMART" id="SM00146">
    <property type="entry name" value="PI3Kc"/>
    <property type="match status" value="1"/>
</dbReference>
<dbReference type="SUPFAM" id="SSF56112">
    <property type="entry name" value="Protein kinase-like (PK-like)"/>
    <property type="match status" value="1"/>
</dbReference>
<dbReference type="PROSITE" id="PS51189">
    <property type="entry name" value="FAT"/>
    <property type="match status" value="1"/>
</dbReference>
<dbReference type="PROSITE" id="PS51190">
    <property type="entry name" value="FATC"/>
    <property type="match status" value="1"/>
</dbReference>
<dbReference type="PROSITE" id="PS50290">
    <property type="entry name" value="PI3_4_KINASE_3"/>
    <property type="match status" value="1"/>
</dbReference>
<accession>Q8SSE7</accession>
<reference key="1">
    <citation type="journal article" date="2001" name="Nature">
        <title>Genome sequence and gene compaction of the eukaryote parasite Encephalitozoon cuniculi.</title>
        <authorList>
            <person name="Katinka M.D."/>
            <person name="Duprat S."/>
            <person name="Cornillot E."/>
            <person name="Metenier G."/>
            <person name="Thomarat F."/>
            <person name="Prensier G."/>
            <person name="Barbe V."/>
            <person name="Peyretaillade E."/>
            <person name="Brottier P."/>
            <person name="Wincker P."/>
            <person name="Delbac F."/>
            <person name="El Alaoui H."/>
            <person name="Peyret P."/>
            <person name="Saurin W."/>
            <person name="Gouy M."/>
            <person name="Weissenbach J."/>
            <person name="Vivares C.P."/>
        </authorList>
    </citation>
    <scope>NUCLEOTIDE SEQUENCE [LARGE SCALE GENOMIC DNA]</scope>
    <source>
        <strain>GB-M1</strain>
    </source>
</reference>
<reference key="2">
    <citation type="journal article" date="2009" name="BMC Genomics">
        <title>Identification of transcriptional signals in Encephalitozoon cuniculi widespread among Microsporidia phylum: support for accurate structural genome annotation.</title>
        <authorList>
            <person name="Peyretaillade E."/>
            <person name="Goncalves O."/>
            <person name="Terrat S."/>
            <person name="Dugat-Bony E."/>
            <person name="Wincker P."/>
            <person name="Cornman R.S."/>
            <person name="Evans J.D."/>
            <person name="Delbac F."/>
            <person name="Peyret P."/>
        </authorList>
    </citation>
    <scope>GENOME REANNOTATION</scope>
    <source>
        <strain>GB-M1</strain>
    </source>
</reference>
<reference key="3">
    <citation type="journal article" date="2007" name="BMC Genomics">
        <title>The complement of protein kinases of the microsporidium Encephalitozoon cuniculi in relation to those of Saccharomyces cerevisiae and Schizosaccharomyces pombe.</title>
        <authorList>
            <person name="Miranda-Saavedra D."/>
            <person name="Stark M.J.R."/>
            <person name="Packer J.C."/>
            <person name="Vivares C.P."/>
            <person name="Doerig C."/>
            <person name="Barton G.J."/>
        </authorList>
    </citation>
    <scope>PREDICTION OF FUNCTION</scope>
</reference>
<keyword id="KW-0067">ATP-binding</keyword>
<keyword id="KW-0156">Chromatin regulator</keyword>
<keyword id="KW-0227">DNA damage</keyword>
<keyword id="KW-0234">DNA repair</keyword>
<keyword id="KW-0418">Kinase</keyword>
<keyword id="KW-0469">Meiosis</keyword>
<keyword id="KW-0547">Nucleotide-binding</keyword>
<keyword id="KW-0539">Nucleus</keyword>
<keyword id="KW-1185">Reference proteome</keyword>
<keyword id="KW-0723">Serine/threonine-protein kinase</keyword>
<keyword id="KW-0808">Transferase</keyword>
<organism>
    <name type="scientific">Encephalitozoon cuniculi (strain GB-M1)</name>
    <name type="common">Microsporidian parasite</name>
    <dbReference type="NCBI Taxonomy" id="284813"/>
    <lineage>
        <taxon>Eukaryota</taxon>
        <taxon>Fungi</taxon>
        <taxon>Fungi incertae sedis</taxon>
        <taxon>Microsporidia</taxon>
        <taxon>Unikaryonidae</taxon>
        <taxon>Encephalitozoon</taxon>
    </lineage>
</organism>
<gene>
    <name type="primary">MEC1</name>
    <name type="ordered locus">ECU02_1130</name>
</gene>
<sequence>MNRDYLKNLYLQRLESERYSDVFRESMSSLVSTEIINAVISLAVQDDDETMLVDLLELFLQNLESNVVFHEKLTKSSFHLLLFKRPLGIQSYTKLKSIYDRVGSRRVVPGFEHTEFLSKNFYNYCLYKHAYKDYQFDLELDAGSLGPVETNLFKDLLKAVCIENRENEHLANYIKTLPMDVSVFLAIVMPDFRIDASRLGPEDVFLVCPSQVRGYDPKQFTKAFLCSLNSEGGLCRVCGRRVLGCGFEEIDREEYLDSVSGNIEEMCFGVSHWEKIRTPRMLTTILRSLFKRPGCLECYKCLRYFPIEEQGEMEDIVLRFLRYAASILSIGNIQVSLRMFPFIRHTPRVVFSYFVILFEGFLKYSGNLFLKNVIRNVSTRNKAKFMGVRAMIFEYYLKGSIESASSTEENTKNEGGSGAVENPGRKRADDLGDLFAPLSEFFDEERKAFVRNNMFYIYPIMYSLSFPYYTPDLAFTQANNHFLIISLFLRGEESRIDEIGYGKDELYRMGVDVMIPLLCNGYFKYDVLSRFFGNVQEYIRAHLPKFLFALKKVYVERPFEFRVCVFKILKCIIEAISGNVRMLFNYLFPFVEFFMRSHEESCGTDCKMIFIEYYSSFFKNDCLVRNMSRIFPYLDAEKIARWSNVKSEDDYLDIVIGLLDTRGHFSQEMAAKKAVELLARVFGDPGKGKGFDEESFVENVLRRFFKSREFRMKIGNVYGKLKELGNDAAFLIGCISQEFLDANPLPSVCSVLIEECTPEAIARVMVEKYLFEMDPGKQDLHFFIIQETLRFIKGPLSDRMEEVVEQFRSTQYFYEYVPVHPVEGVYEKTYTFKRFLGRLYRYSLNEIAKSEMQEYFSLLKYGNLLDTLFLEFHCLCLCRLLLEAGDHKVLGMVREIANNLQEGVDKRIARFVLKLHGFTSGKHIEDQQILRISFFLKDHHNAIQTLEKMIRKERKSELFDLLQYCYYSIKDYDKVLGINSVFARPSLINLFFRFCVDKNFAAARRCLEPKPGHDGVKEESGEDHKGQAPRELDVKILMEEIIDECQDDEVTKFMNDCKKIEGDFSEWKRLESRNEVFKHFIKDCELVSKSKNLLKTLDLIAGRRELAGDNRMLLECHESLVASIRSMMDARDDMSCDEMFESLLTAEKQDTIGNSSQGLHSREYFDDFASVDMVRAERRSERIGYMDRSKSGSTSGYSSLEEFERDLKLAIIRNYRGDDDVGRCIQEIGGMLLKREWCVLYELAELNVLQGKIGDAKTSLKKVLEIFPKTSMLYKKALIRYSELLDTKTAYTSALSILKDSGKLFLLGAKKFESTEPVKAMEMYINSVIHDNQCSDEAVPRIFHLFSEMMPPGDINAGAVLLKKFLESSISLLPPYYNQILSRLSHPNQDVANVVSRIVFELMENYPSKTFWRSLIMMNSQVPSTRKRMEGIVSGLTLDNKVALSNVKRISEELTCISRSKKNELTMEEDFPAFAKMFPAGVTVPNTKVLISGVRNEVKVFNSLQRPKRICFVGSDGKNYYWLCKNQDDLRKDSRFMDLNLIINSILKKQSSRKYIRTYAVIPFSHESGIIEWIGGLSSLKAICDTYYARDGISISETACRFVHNKKIGMREWHRVASKFHPKFHLWFHDSFPHPFSWLVARNNYTQTYAIMNIVGWFMGLGDRHAENILFDSNTGDTVHVDLNCIFGKGKELQVPERVPYRLTQNIVDAFGVLGLEGSYNTSLCTTLDLFLKNKNILVSNLLSFVYDPLFEWRRKSATTPKKIIEDLWHKMDDLDACSKCDVLNEEATNDENLCMMYIGWLPFI</sequence>
<name>ATR_ENCCU</name>